<comment type="function">
    <text evidence="2">GTP hydrolase that promotes the GTP-dependent binding of aminoacyl-tRNA to the A-site of ribosomes during protein biosynthesis.</text>
</comment>
<comment type="catalytic activity">
    <reaction evidence="2">
        <text>GTP + H2O = GDP + phosphate + H(+)</text>
        <dbReference type="Rhea" id="RHEA:19669"/>
        <dbReference type="ChEBI" id="CHEBI:15377"/>
        <dbReference type="ChEBI" id="CHEBI:15378"/>
        <dbReference type="ChEBI" id="CHEBI:37565"/>
        <dbReference type="ChEBI" id="CHEBI:43474"/>
        <dbReference type="ChEBI" id="CHEBI:58189"/>
        <dbReference type="EC" id="3.6.5.3"/>
    </reaction>
    <physiologicalReaction direction="left-to-right" evidence="2">
        <dbReference type="Rhea" id="RHEA:19670"/>
    </physiologicalReaction>
</comment>
<comment type="subunit">
    <text evidence="2">Monomer.</text>
</comment>
<comment type="subcellular location">
    <subcellularLocation>
        <location evidence="2">Cytoplasm</location>
    </subcellularLocation>
</comment>
<comment type="similarity">
    <text evidence="2">Belongs to the TRAFAC class translation factor GTPase superfamily. Classic translation factor GTPase family. EF-Tu/EF-1A subfamily.</text>
</comment>
<name>EFTU_MYCA9</name>
<accession>B1MGH7</accession>
<sequence>MAKAKFERTKPHVNIGTIGHVDHGKTTLTAAITKVLHDKYPDLNEASAFDQIDNAPEEKARGITINISHVEYQTEKRHYAHVDAPGHADYIKNMITGAAQMDGAILVVAATDGPMPQTREHVLLARQVGVPYILVALNKSDMVDDEELLELVEMEVRELLSSQDFDGDNAPVVRVSALKALEGDAEWGKTVADLMDAVDESIPDPVRETEKPFLMPVEDVFTITGRGTVVTGRVERGVINVNEDVEIVGIKDTTTKTTVTGVEMFRKLLDQGQAGDNVGLLVRGVKREDVERGQVVVKPGTTTPHTEFEGSVYILSKDEGGRHTPFFNNYRPQFYFRTTDVTGVVTLPEGTEMVMPGDNTDISVKLIQPVAMDEGLRFAIREGGRTVGAGRVTKIIK</sequence>
<proteinExistence type="inferred from homology"/>
<protein>
    <recommendedName>
        <fullName evidence="2">Elongation factor Tu</fullName>
        <shortName evidence="2">EF-Tu</shortName>
        <ecNumber evidence="2">3.6.5.3</ecNumber>
    </recommendedName>
</protein>
<organism>
    <name type="scientific">Mycobacteroides abscessus (strain ATCC 19977 / DSM 44196 / CCUG 20993 / CIP 104536 / JCM 13569 / NCTC 13031 / TMC 1543 / L948)</name>
    <name type="common">Mycobacterium abscessus</name>
    <dbReference type="NCBI Taxonomy" id="561007"/>
    <lineage>
        <taxon>Bacteria</taxon>
        <taxon>Bacillati</taxon>
        <taxon>Actinomycetota</taxon>
        <taxon>Actinomycetes</taxon>
        <taxon>Mycobacteriales</taxon>
        <taxon>Mycobacteriaceae</taxon>
        <taxon>Mycobacteroides</taxon>
        <taxon>Mycobacteroides abscessus</taxon>
    </lineage>
</organism>
<dbReference type="EC" id="3.6.5.3" evidence="2"/>
<dbReference type="EMBL" id="CU458896">
    <property type="protein sequence ID" value="CAM63922.1"/>
    <property type="molecule type" value="Genomic_DNA"/>
</dbReference>
<dbReference type="RefSeq" id="WP_005055596.1">
    <property type="nucleotide sequence ID" value="NZ_MLCG01000001.1"/>
</dbReference>
<dbReference type="SMR" id="B1MGH7"/>
<dbReference type="GeneID" id="93380786"/>
<dbReference type="KEGG" id="mab:MAB_3848c"/>
<dbReference type="Proteomes" id="UP000007137">
    <property type="component" value="Chromosome"/>
</dbReference>
<dbReference type="GO" id="GO:0005829">
    <property type="term" value="C:cytosol"/>
    <property type="evidence" value="ECO:0007669"/>
    <property type="project" value="TreeGrafter"/>
</dbReference>
<dbReference type="GO" id="GO:0005525">
    <property type="term" value="F:GTP binding"/>
    <property type="evidence" value="ECO:0007669"/>
    <property type="project" value="UniProtKB-UniRule"/>
</dbReference>
<dbReference type="GO" id="GO:0003924">
    <property type="term" value="F:GTPase activity"/>
    <property type="evidence" value="ECO:0007669"/>
    <property type="project" value="InterPro"/>
</dbReference>
<dbReference type="GO" id="GO:0003746">
    <property type="term" value="F:translation elongation factor activity"/>
    <property type="evidence" value="ECO:0007669"/>
    <property type="project" value="UniProtKB-UniRule"/>
</dbReference>
<dbReference type="CDD" id="cd01884">
    <property type="entry name" value="EF_Tu"/>
    <property type="match status" value="1"/>
</dbReference>
<dbReference type="CDD" id="cd03697">
    <property type="entry name" value="EFTU_II"/>
    <property type="match status" value="1"/>
</dbReference>
<dbReference type="CDD" id="cd03707">
    <property type="entry name" value="EFTU_III"/>
    <property type="match status" value="1"/>
</dbReference>
<dbReference type="FunFam" id="2.40.30.10:FF:000001">
    <property type="entry name" value="Elongation factor Tu"/>
    <property type="match status" value="1"/>
</dbReference>
<dbReference type="FunFam" id="3.40.50.300:FF:000003">
    <property type="entry name" value="Elongation factor Tu"/>
    <property type="match status" value="1"/>
</dbReference>
<dbReference type="Gene3D" id="3.40.50.300">
    <property type="entry name" value="P-loop containing nucleotide triphosphate hydrolases"/>
    <property type="match status" value="1"/>
</dbReference>
<dbReference type="Gene3D" id="2.40.30.10">
    <property type="entry name" value="Translation factors"/>
    <property type="match status" value="2"/>
</dbReference>
<dbReference type="HAMAP" id="MF_00118_B">
    <property type="entry name" value="EF_Tu_B"/>
    <property type="match status" value="1"/>
</dbReference>
<dbReference type="InterPro" id="IPR041709">
    <property type="entry name" value="EF-Tu_GTP-bd"/>
</dbReference>
<dbReference type="InterPro" id="IPR050055">
    <property type="entry name" value="EF-Tu_GTPase"/>
</dbReference>
<dbReference type="InterPro" id="IPR004161">
    <property type="entry name" value="EFTu-like_2"/>
</dbReference>
<dbReference type="InterPro" id="IPR033720">
    <property type="entry name" value="EFTU_2"/>
</dbReference>
<dbReference type="InterPro" id="IPR031157">
    <property type="entry name" value="G_TR_CS"/>
</dbReference>
<dbReference type="InterPro" id="IPR027417">
    <property type="entry name" value="P-loop_NTPase"/>
</dbReference>
<dbReference type="InterPro" id="IPR005225">
    <property type="entry name" value="Small_GTP-bd"/>
</dbReference>
<dbReference type="InterPro" id="IPR000795">
    <property type="entry name" value="T_Tr_GTP-bd_dom"/>
</dbReference>
<dbReference type="InterPro" id="IPR009000">
    <property type="entry name" value="Transl_B-barrel_sf"/>
</dbReference>
<dbReference type="InterPro" id="IPR009001">
    <property type="entry name" value="Transl_elong_EF1A/Init_IF2_C"/>
</dbReference>
<dbReference type="InterPro" id="IPR004541">
    <property type="entry name" value="Transl_elong_EFTu/EF1A_bac/org"/>
</dbReference>
<dbReference type="InterPro" id="IPR004160">
    <property type="entry name" value="Transl_elong_EFTu/EF1A_C"/>
</dbReference>
<dbReference type="NCBIfam" id="TIGR00485">
    <property type="entry name" value="EF-Tu"/>
    <property type="match status" value="1"/>
</dbReference>
<dbReference type="NCBIfam" id="NF000766">
    <property type="entry name" value="PRK00049.1"/>
    <property type="match status" value="1"/>
</dbReference>
<dbReference type="NCBIfam" id="NF009372">
    <property type="entry name" value="PRK12735.1"/>
    <property type="match status" value="1"/>
</dbReference>
<dbReference type="NCBIfam" id="NF009373">
    <property type="entry name" value="PRK12736.1"/>
    <property type="match status" value="1"/>
</dbReference>
<dbReference type="NCBIfam" id="TIGR00231">
    <property type="entry name" value="small_GTP"/>
    <property type="match status" value="1"/>
</dbReference>
<dbReference type="PANTHER" id="PTHR43721:SF22">
    <property type="entry name" value="ELONGATION FACTOR TU, MITOCHONDRIAL"/>
    <property type="match status" value="1"/>
</dbReference>
<dbReference type="PANTHER" id="PTHR43721">
    <property type="entry name" value="ELONGATION FACTOR TU-RELATED"/>
    <property type="match status" value="1"/>
</dbReference>
<dbReference type="Pfam" id="PF00009">
    <property type="entry name" value="GTP_EFTU"/>
    <property type="match status" value="1"/>
</dbReference>
<dbReference type="Pfam" id="PF03144">
    <property type="entry name" value="GTP_EFTU_D2"/>
    <property type="match status" value="1"/>
</dbReference>
<dbReference type="Pfam" id="PF03143">
    <property type="entry name" value="GTP_EFTU_D3"/>
    <property type="match status" value="1"/>
</dbReference>
<dbReference type="PRINTS" id="PR00315">
    <property type="entry name" value="ELONGATNFCT"/>
</dbReference>
<dbReference type="SUPFAM" id="SSF50465">
    <property type="entry name" value="EF-Tu/eEF-1alpha/eIF2-gamma C-terminal domain"/>
    <property type="match status" value="1"/>
</dbReference>
<dbReference type="SUPFAM" id="SSF52540">
    <property type="entry name" value="P-loop containing nucleoside triphosphate hydrolases"/>
    <property type="match status" value="1"/>
</dbReference>
<dbReference type="SUPFAM" id="SSF50447">
    <property type="entry name" value="Translation proteins"/>
    <property type="match status" value="1"/>
</dbReference>
<dbReference type="PROSITE" id="PS00301">
    <property type="entry name" value="G_TR_1"/>
    <property type="match status" value="1"/>
</dbReference>
<dbReference type="PROSITE" id="PS51722">
    <property type="entry name" value="G_TR_2"/>
    <property type="match status" value="1"/>
</dbReference>
<reference key="1">
    <citation type="journal article" date="2009" name="PLoS ONE">
        <title>Non mycobacterial virulence genes in the genome of the emerging pathogen Mycobacterium abscessus.</title>
        <authorList>
            <person name="Ripoll F."/>
            <person name="Pasek S."/>
            <person name="Schenowitz C."/>
            <person name="Dossat C."/>
            <person name="Barbe V."/>
            <person name="Rottman M."/>
            <person name="Macheras E."/>
            <person name="Heym B."/>
            <person name="Herrmann J.L."/>
            <person name="Daffe M."/>
            <person name="Brosch R."/>
            <person name="Risler J.L."/>
            <person name="Gaillard J.L."/>
        </authorList>
    </citation>
    <scope>NUCLEOTIDE SEQUENCE [LARGE SCALE GENOMIC DNA]</scope>
    <source>
        <strain>ATCC 19977 / DSM 44196 / CCUG 20993 / CIP 104536 / JCM 13569 / NCTC 13031 / TMC 1543 / L948</strain>
    </source>
</reference>
<evidence type="ECO:0000250" key="1"/>
<evidence type="ECO:0000255" key="2">
    <source>
        <dbReference type="HAMAP-Rule" id="MF_00118"/>
    </source>
</evidence>
<feature type="chain" id="PRO_1000095079" description="Elongation factor Tu">
    <location>
        <begin position="1"/>
        <end position="397"/>
    </location>
</feature>
<feature type="domain" description="tr-type G">
    <location>
        <begin position="10"/>
        <end position="206"/>
    </location>
</feature>
<feature type="region of interest" description="G1" evidence="1">
    <location>
        <begin position="19"/>
        <end position="26"/>
    </location>
</feature>
<feature type="region of interest" description="G2" evidence="1">
    <location>
        <begin position="62"/>
        <end position="66"/>
    </location>
</feature>
<feature type="region of interest" description="G3" evidence="1">
    <location>
        <begin position="83"/>
        <end position="86"/>
    </location>
</feature>
<feature type="region of interest" description="G4" evidence="1">
    <location>
        <begin position="138"/>
        <end position="141"/>
    </location>
</feature>
<feature type="region of interest" description="G5" evidence="1">
    <location>
        <begin position="176"/>
        <end position="178"/>
    </location>
</feature>
<feature type="binding site" evidence="2">
    <location>
        <begin position="19"/>
        <end position="26"/>
    </location>
    <ligand>
        <name>GTP</name>
        <dbReference type="ChEBI" id="CHEBI:37565"/>
    </ligand>
</feature>
<feature type="binding site" evidence="2">
    <location>
        <position position="26"/>
    </location>
    <ligand>
        <name>Mg(2+)</name>
        <dbReference type="ChEBI" id="CHEBI:18420"/>
    </ligand>
</feature>
<feature type="binding site" evidence="2">
    <location>
        <begin position="83"/>
        <end position="87"/>
    </location>
    <ligand>
        <name>GTP</name>
        <dbReference type="ChEBI" id="CHEBI:37565"/>
    </ligand>
</feature>
<feature type="binding site" evidence="2">
    <location>
        <begin position="138"/>
        <end position="141"/>
    </location>
    <ligand>
        <name>GTP</name>
        <dbReference type="ChEBI" id="CHEBI:37565"/>
    </ligand>
</feature>
<gene>
    <name evidence="2" type="primary">tuf</name>
    <name type="ordered locus">MAB_3848c</name>
</gene>
<keyword id="KW-0963">Cytoplasm</keyword>
<keyword id="KW-0251">Elongation factor</keyword>
<keyword id="KW-0342">GTP-binding</keyword>
<keyword id="KW-0378">Hydrolase</keyword>
<keyword id="KW-0460">Magnesium</keyword>
<keyword id="KW-0479">Metal-binding</keyword>
<keyword id="KW-0547">Nucleotide-binding</keyword>
<keyword id="KW-0648">Protein biosynthesis</keyword>
<keyword id="KW-1185">Reference proteome</keyword>